<accession>Q0W8A8</accession>
<keyword id="KW-0315">Glutamine amidotransferase</keyword>
<keyword id="KW-0378">Hydrolase</keyword>
<keyword id="KW-0456">Lyase</keyword>
<keyword id="KW-0663">Pyridoxal phosphate</keyword>
<keyword id="KW-1185">Reference proteome</keyword>
<reference key="1">
    <citation type="journal article" date="2006" name="Science">
        <title>Genome of rice cluster I archaea -- the key methane producers in the rice rhizosphere.</title>
        <authorList>
            <person name="Erkel C."/>
            <person name="Kube M."/>
            <person name="Reinhardt R."/>
            <person name="Liesack W."/>
        </authorList>
    </citation>
    <scope>NUCLEOTIDE SEQUENCE [LARGE SCALE GENOMIC DNA]</scope>
    <source>
        <strain>DSM 22066 / NBRC 105507 / MRE50</strain>
    </source>
</reference>
<evidence type="ECO:0000255" key="1">
    <source>
        <dbReference type="HAMAP-Rule" id="MF_01615"/>
    </source>
</evidence>
<feature type="chain" id="PRO_0000293025" description="Pyridoxal 5'-phosphate synthase subunit PdxT">
    <location>
        <begin position="1"/>
        <end position="198"/>
    </location>
</feature>
<feature type="active site" description="Nucleophile" evidence="1">
    <location>
        <position position="81"/>
    </location>
</feature>
<feature type="active site" description="Charge relay system" evidence="1">
    <location>
        <position position="176"/>
    </location>
</feature>
<feature type="active site" description="Charge relay system" evidence="1">
    <location>
        <position position="178"/>
    </location>
</feature>
<feature type="binding site" evidence="1">
    <location>
        <begin position="49"/>
        <end position="51"/>
    </location>
    <ligand>
        <name>L-glutamine</name>
        <dbReference type="ChEBI" id="CHEBI:58359"/>
    </ligand>
</feature>
<feature type="binding site" evidence="1">
    <location>
        <position position="112"/>
    </location>
    <ligand>
        <name>L-glutamine</name>
        <dbReference type="ChEBI" id="CHEBI:58359"/>
    </ligand>
</feature>
<feature type="binding site" evidence="1">
    <location>
        <begin position="140"/>
        <end position="141"/>
    </location>
    <ligand>
        <name>L-glutamine</name>
        <dbReference type="ChEBI" id="CHEBI:58359"/>
    </ligand>
</feature>
<name>PDXT_METAR</name>
<dbReference type="EC" id="4.3.3.6" evidence="1"/>
<dbReference type="EC" id="3.5.1.2" evidence="1"/>
<dbReference type="EMBL" id="AM114193">
    <property type="protein sequence ID" value="CAJ35385.1"/>
    <property type="molecule type" value="Genomic_DNA"/>
</dbReference>
<dbReference type="RefSeq" id="WP_012037107.1">
    <property type="nucleotide sequence ID" value="NC_009464.1"/>
</dbReference>
<dbReference type="SMR" id="Q0W8A8"/>
<dbReference type="STRING" id="351160.LRC426"/>
<dbReference type="MEROPS" id="C26.A32"/>
<dbReference type="GeneID" id="5145166"/>
<dbReference type="KEGG" id="rci:LRC426"/>
<dbReference type="PATRIC" id="fig|351160.9.peg.2858"/>
<dbReference type="eggNOG" id="arCOG00034">
    <property type="taxonomic scope" value="Archaea"/>
</dbReference>
<dbReference type="OrthoDB" id="26717at2157"/>
<dbReference type="UniPathway" id="UPA00245"/>
<dbReference type="Proteomes" id="UP000000663">
    <property type="component" value="Chromosome"/>
</dbReference>
<dbReference type="GO" id="GO:0005829">
    <property type="term" value="C:cytosol"/>
    <property type="evidence" value="ECO:0007669"/>
    <property type="project" value="TreeGrafter"/>
</dbReference>
<dbReference type="GO" id="GO:1903600">
    <property type="term" value="C:glutaminase complex"/>
    <property type="evidence" value="ECO:0007669"/>
    <property type="project" value="TreeGrafter"/>
</dbReference>
<dbReference type="GO" id="GO:0004359">
    <property type="term" value="F:glutaminase activity"/>
    <property type="evidence" value="ECO:0007669"/>
    <property type="project" value="UniProtKB-UniRule"/>
</dbReference>
<dbReference type="GO" id="GO:0036381">
    <property type="term" value="F:pyridoxal 5'-phosphate synthase (glutamine hydrolysing) activity"/>
    <property type="evidence" value="ECO:0007669"/>
    <property type="project" value="UniProtKB-UniRule"/>
</dbReference>
<dbReference type="GO" id="GO:0006543">
    <property type="term" value="P:glutamine catabolic process"/>
    <property type="evidence" value="ECO:0007669"/>
    <property type="project" value="UniProtKB-UniRule"/>
</dbReference>
<dbReference type="GO" id="GO:0042823">
    <property type="term" value="P:pyridoxal phosphate biosynthetic process"/>
    <property type="evidence" value="ECO:0007669"/>
    <property type="project" value="UniProtKB-UniRule"/>
</dbReference>
<dbReference type="GO" id="GO:0008614">
    <property type="term" value="P:pyridoxine metabolic process"/>
    <property type="evidence" value="ECO:0007669"/>
    <property type="project" value="TreeGrafter"/>
</dbReference>
<dbReference type="CDD" id="cd01749">
    <property type="entry name" value="GATase1_PB"/>
    <property type="match status" value="1"/>
</dbReference>
<dbReference type="FunFam" id="3.40.50.880:FF:000041">
    <property type="entry name" value="Glutamine amidotransferase subunit pdxT, putative"/>
    <property type="match status" value="1"/>
</dbReference>
<dbReference type="Gene3D" id="3.40.50.880">
    <property type="match status" value="1"/>
</dbReference>
<dbReference type="HAMAP" id="MF_01615">
    <property type="entry name" value="PdxT"/>
    <property type="match status" value="1"/>
</dbReference>
<dbReference type="InterPro" id="IPR029062">
    <property type="entry name" value="Class_I_gatase-like"/>
</dbReference>
<dbReference type="InterPro" id="IPR002161">
    <property type="entry name" value="PdxT/SNO"/>
</dbReference>
<dbReference type="InterPro" id="IPR021196">
    <property type="entry name" value="PdxT/SNO_CS"/>
</dbReference>
<dbReference type="NCBIfam" id="TIGR03800">
    <property type="entry name" value="PLP_synth_Pdx2"/>
    <property type="match status" value="1"/>
</dbReference>
<dbReference type="PANTHER" id="PTHR31559">
    <property type="entry name" value="PYRIDOXAL 5'-PHOSPHATE SYNTHASE SUBUNIT SNO"/>
    <property type="match status" value="1"/>
</dbReference>
<dbReference type="PANTHER" id="PTHR31559:SF0">
    <property type="entry name" value="PYRIDOXAL 5'-PHOSPHATE SYNTHASE SUBUNIT SNO1-RELATED"/>
    <property type="match status" value="1"/>
</dbReference>
<dbReference type="Pfam" id="PF01174">
    <property type="entry name" value="SNO"/>
    <property type="match status" value="1"/>
</dbReference>
<dbReference type="PIRSF" id="PIRSF005639">
    <property type="entry name" value="Glut_amidoT_SNO"/>
    <property type="match status" value="1"/>
</dbReference>
<dbReference type="SUPFAM" id="SSF52317">
    <property type="entry name" value="Class I glutamine amidotransferase-like"/>
    <property type="match status" value="1"/>
</dbReference>
<dbReference type="PROSITE" id="PS01236">
    <property type="entry name" value="PDXT_SNO_1"/>
    <property type="match status" value="1"/>
</dbReference>
<dbReference type="PROSITE" id="PS51130">
    <property type="entry name" value="PDXT_SNO_2"/>
    <property type="match status" value="1"/>
</dbReference>
<sequence length="198" mass="21791">MRIGVIAIQGNVEEHVEAMKRALGGKGEVVTIKHSGIVPTCDAIVIPGGESTTLCRLAWREGIAQEIIEKARQGMPIWGTCAGLILLASRGDEEVTKTKQQLFGLMDITVNRNAFGRQIDSFEAPLAIAGFDEPFNAVFIRAPAIVSAGQNVKVLAKYDDFIVAARQQNLLVSAFHPELTDDLRFHWYFLEMVPGWKN</sequence>
<proteinExistence type="inferred from homology"/>
<gene>
    <name evidence="1" type="primary">pdxT</name>
    <name type="ordered locus">UNCMA_27920</name>
    <name type="ORF">LRC426</name>
</gene>
<protein>
    <recommendedName>
        <fullName evidence="1">Pyridoxal 5'-phosphate synthase subunit PdxT</fullName>
        <ecNumber evidence="1">4.3.3.6</ecNumber>
    </recommendedName>
    <alternativeName>
        <fullName evidence="1">Pdx2</fullName>
    </alternativeName>
    <alternativeName>
        <fullName evidence="1">Pyridoxal 5'-phosphate synthase glutaminase subunit</fullName>
        <ecNumber evidence="1">3.5.1.2</ecNumber>
    </alternativeName>
</protein>
<organism>
    <name type="scientific">Methanocella arvoryzae (strain DSM 22066 / NBRC 105507 / MRE50)</name>
    <dbReference type="NCBI Taxonomy" id="351160"/>
    <lineage>
        <taxon>Archaea</taxon>
        <taxon>Methanobacteriati</taxon>
        <taxon>Methanobacteriota</taxon>
        <taxon>Stenosarchaea group</taxon>
        <taxon>Methanomicrobia</taxon>
        <taxon>Methanocellales</taxon>
        <taxon>Methanocellaceae</taxon>
        <taxon>Methanocella</taxon>
    </lineage>
</organism>
<comment type="function">
    <text evidence="1">Catalyzes the hydrolysis of glutamine to glutamate and ammonia as part of the biosynthesis of pyridoxal 5'-phosphate. The resulting ammonia molecule is channeled to the active site of PdxS.</text>
</comment>
<comment type="catalytic activity">
    <reaction evidence="1">
        <text>aldehydo-D-ribose 5-phosphate + D-glyceraldehyde 3-phosphate + L-glutamine = pyridoxal 5'-phosphate + L-glutamate + phosphate + 3 H2O + H(+)</text>
        <dbReference type="Rhea" id="RHEA:31507"/>
        <dbReference type="ChEBI" id="CHEBI:15377"/>
        <dbReference type="ChEBI" id="CHEBI:15378"/>
        <dbReference type="ChEBI" id="CHEBI:29985"/>
        <dbReference type="ChEBI" id="CHEBI:43474"/>
        <dbReference type="ChEBI" id="CHEBI:58273"/>
        <dbReference type="ChEBI" id="CHEBI:58359"/>
        <dbReference type="ChEBI" id="CHEBI:59776"/>
        <dbReference type="ChEBI" id="CHEBI:597326"/>
        <dbReference type="EC" id="4.3.3.6"/>
    </reaction>
</comment>
<comment type="catalytic activity">
    <reaction evidence="1">
        <text>L-glutamine + H2O = L-glutamate + NH4(+)</text>
        <dbReference type="Rhea" id="RHEA:15889"/>
        <dbReference type="ChEBI" id="CHEBI:15377"/>
        <dbReference type="ChEBI" id="CHEBI:28938"/>
        <dbReference type="ChEBI" id="CHEBI:29985"/>
        <dbReference type="ChEBI" id="CHEBI:58359"/>
        <dbReference type="EC" id="3.5.1.2"/>
    </reaction>
</comment>
<comment type="pathway">
    <text evidence="1">Cofactor biosynthesis; pyridoxal 5'-phosphate biosynthesis.</text>
</comment>
<comment type="subunit">
    <text evidence="1">In the presence of PdxS, forms a dodecamer of heterodimers. Only shows activity in the heterodimer.</text>
</comment>
<comment type="similarity">
    <text evidence="1">Belongs to the glutaminase PdxT/SNO family.</text>
</comment>